<feature type="chain" id="PRO_1000079238" description="Chaperone protein DnaK">
    <location>
        <begin position="1"/>
        <end position="623"/>
    </location>
</feature>
<feature type="region of interest" description="Disordered" evidence="2">
    <location>
        <begin position="584"/>
        <end position="623"/>
    </location>
</feature>
<feature type="compositionally biased region" description="Low complexity" evidence="2">
    <location>
        <begin position="585"/>
        <end position="601"/>
    </location>
</feature>
<feature type="modified residue" description="Phosphothreonine; by autocatalysis" evidence="1">
    <location>
        <position position="175"/>
    </location>
</feature>
<gene>
    <name evidence="1" type="primary">dnaK</name>
    <name type="ordered locus">RSal33209_1909</name>
</gene>
<reference key="1">
    <citation type="journal article" date="2008" name="J. Bacteriol.">
        <title>Genome sequence of the fish pathogen Renibacterium salmoninarum suggests reductive evolution away from an environmental Arthrobacter ancestor.</title>
        <authorList>
            <person name="Wiens G.D."/>
            <person name="Rockey D.D."/>
            <person name="Wu Z."/>
            <person name="Chang J."/>
            <person name="Levy R."/>
            <person name="Crane S."/>
            <person name="Chen D.S."/>
            <person name="Capri G.R."/>
            <person name="Burnett J.R."/>
            <person name="Sudheesh P.S."/>
            <person name="Schipma M.J."/>
            <person name="Burd H."/>
            <person name="Bhattacharyya A."/>
            <person name="Rhodes L.D."/>
            <person name="Kaul R."/>
            <person name="Strom M.S."/>
        </authorList>
    </citation>
    <scope>NUCLEOTIDE SEQUENCE [LARGE SCALE GENOMIC DNA]</scope>
    <source>
        <strain>ATCC 33209 / DSM 20767 / JCM 11484 / NBRC 15589 / NCIMB 2235</strain>
    </source>
</reference>
<proteinExistence type="inferred from homology"/>
<accession>A9WQR3</accession>
<protein>
    <recommendedName>
        <fullName evidence="1">Chaperone protein DnaK</fullName>
    </recommendedName>
    <alternativeName>
        <fullName evidence="1">HSP70</fullName>
    </alternativeName>
    <alternativeName>
        <fullName evidence="1">Heat shock 70 kDa protein</fullName>
    </alternativeName>
    <alternativeName>
        <fullName evidence="1">Heat shock protein 70</fullName>
    </alternativeName>
</protein>
<evidence type="ECO:0000255" key="1">
    <source>
        <dbReference type="HAMAP-Rule" id="MF_00332"/>
    </source>
</evidence>
<evidence type="ECO:0000256" key="2">
    <source>
        <dbReference type="SAM" id="MobiDB-lite"/>
    </source>
</evidence>
<dbReference type="EMBL" id="CP000910">
    <property type="protein sequence ID" value="ABY23642.1"/>
    <property type="molecule type" value="Genomic_DNA"/>
</dbReference>
<dbReference type="RefSeq" id="WP_012245313.1">
    <property type="nucleotide sequence ID" value="NC_010168.1"/>
</dbReference>
<dbReference type="SMR" id="A9WQR3"/>
<dbReference type="STRING" id="288705.RSal33209_1909"/>
<dbReference type="KEGG" id="rsa:RSal33209_1909"/>
<dbReference type="eggNOG" id="COG0443">
    <property type="taxonomic scope" value="Bacteria"/>
</dbReference>
<dbReference type="HOGENOM" id="CLU_005965_2_4_11"/>
<dbReference type="Proteomes" id="UP000002007">
    <property type="component" value="Chromosome"/>
</dbReference>
<dbReference type="GO" id="GO:0005524">
    <property type="term" value="F:ATP binding"/>
    <property type="evidence" value="ECO:0007669"/>
    <property type="project" value="UniProtKB-UniRule"/>
</dbReference>
<dbReference type="GO" id="GO:0140662">
    <property type="term" value="F:ATP-dependent protein folding chaperone"/>
    <property type="evidence" value="ECO:0007669"/>
    <property type="project" value="InterPro"/>
</dbReference>
<dbReference type="GO" id="GO:0051082">
    <property type="term" value="F:unfolded protein binding"/>
    <property type="evidence" value="ECO:0007669"/>
    <property type="project" value="InterPro"/>
</dbReference>
<dbReference type="CDD" id="cd10234">
    <property type="entry name" value="ASKHA_NBD_HSP70_DnaK-like"/>
    <property type="match status" value="1"/>
</dbReference>
<dbReference type="FunFam" id="2.60.34.10:FF:000014">
    <property type="entry name" value="Chaperone protein DnaK HSP70"/>
    <property type="match status" value="1"/>
</dbReference>
<dbReference type="FunFam" id="1.20.1270.10:FF:000001">
    <property type="entry name" value="Molecular chaperone DnaK"/>
    <property type="match status" value="1"/>
</dbReference>
<dbReference type="FunFam" id="3.30.420.40:FF:000071">
    <property type="entry name" value="Molecular chaperone DnaK"/>
    <property type="match status" value="1"/>
</dbReference>
<dbReference type="FunFam" id="3.90.640.10:FF:000003">
    <property type="entry name" value="Molecular chaperone DnaK"/>
    <property type="match status" value="1"/>
</dbReference>
<dbReference type="Gene3D" id="1.20.1270.10">
    <property type="match status" value="1"/>
</dbReference>
<dbReference type="Gene3D" id="3.30.420.40">
    <property type="match status" value="2"/>
</dbReference>
<dbReference type="Gene3D" id="3.90.640.10">
    <property type="entry name" value="Actin, Chain A, domain 4"/>
    <property type="match status" value="1"/>
</dbReference>
<dbReference type="Gene3D" id="2.60.34.10">
    <property type="entry name" value="Substrate Binding Domain Of DNAk, Chain A, domain 1"/>
    <property type="match status" value="1"/>
</dbReference>
<dbReference type="HAMAP" id="MF_00332">
    <property type="entry name" value="DnaK"/>
    <property type="match status" value="1"/>
</dbReference>
<dbReference type="InterPro" id="IPR043129">
    <property type="entry name" value="ATPase_NBD"/>
</dbReference>
<dbReference type="InterPro" id="IPR012725">
    <property type="entry name" value="Chaperone_DnaK"/>
</dbReference>
<dbReference type="InterPro" id="IPR018181">
    <property type="entry name" value="Heat_shock_70_CS"/>
</dbReference>
<dbReference type="InterPro" id="IPR029048">
    <property type="entry name" value="HSP70_C_sf"/>
</dbReference>
<dbReference type="InterPro" id="IPR029047">
    <property type="entry name" value="HSP70_peptide-bd_sf"/>
</dbReference>
<dbReference type="InterPro" id="IPR013126">
    <property type="entry name" value="Hsp_70_fam"/>
</dbReference>
<dbReference type="NCBIfam" id="NF001413">
    <property type="entry name" value="PRK00290.1"/>
    <property type="match status" value="1"/>
</dbReference>
<dbReference type="NCBIfam" id="TIGR02350">
    <property type="entry name" value="prok_dnaK"/>
    <property type="match status" value="1"/>
</dbReference>
<dbReference type="PANTHER" id="PTHR19375">
    <property type="entry name" value="HEAT SHOCK PROTEIN 70KDA"/>
    <property type="match status" value="1"/>
</dbReference>
<dbReference type="Pfam" id="PF00012">
    <property type="entry name" value="HSP70"/>
    <property type="match status" value="1"/>
</dbReference>
<dbReference type="PRINTS" id="PR00301">
    <property type="entry name" value="HEATSHOCK70"/>
</dbReference>
<dbReference type="SUPFAM" id="SSF53067">
    <property type="entry name" value="Actin-like ATPase domain"/>
    <property type="match status" value="2"/>
</dbReference>
<dbReference type="SUPFAM" id="SSF100920">
    <property type="entry name" value="Heat shock protein 70kD (HSP70), peptide-binding domain"/>
    <property type="match status" value="1"/>
</dbReference>
<dbReference type="PROSITE" id="PS00297">
    <property type="entry name" value="HSP70_1"/>
    <property type="match status" value="1"/>
</dbReference>
<dbReference type="PROSITE" id="PS00329">
    <property type="entry name" value="HSP70_2"/>
    <property type="match status" value="1"/>
</dbReference>
<dbReference type="PROSITE" id="PS01036">
    <property type="entry name" value="HSP70_3"/>
    <property type="match status" value="1"/>
</dbReference>
<sequence length="623" mass="66567">MSRAVGIDLGTTNSVVSVLEGGEPTVIANAEGGRTTPSVVAFSKSGEVLVGEIAKRQAVNNIDRTIASVKRHMGTDWTIDIDDKKYTAQEISARTLMKLKNDAESYLGEKVTDAVITVPAYFNDAERQATKEAGEIAGLNVLRIVNEPTAAALAYGLDKGKEDELILVFDLGGGTFDVSLLEVGKDDDGFSTIQVRATSGDNRLGGDDWDQRVVDYLLNQLKVKGIDLSKDKIALQRLREAAEQAKKELSSATSTNISLQYLSVTPDGPVHLDEQLTRAKFQELTSDLLERTKKPFNDVIAEAGIKVSDIDHIVLVGGSTRMPAVTELVKQLAGGKDPNKGVNPDEVVAVGAALQAGVLKGERKDVLLIDVTPLSLGIETKGGVMTKLIERNTAIPTKRSETFTTADDNQPSVAIQVFQGEREFTRDNKPLGTFELTGIAPAQRGVPQVEVTFDIDANGIVHVSAKDKGTGKEQSMTITGGSSLSKEDIERMVADAEAHAAEDKTRREQADVRNSAEQLAYSVDKILSENDDKLPEEVKTEVKADVESLKAALAGTDEYAVKAASEKLQASQTKLGEAIYASTQAEGAAPAGDAAGAPAGEAKPEEDIVDAEIVDEEPKNEKK</sequence>
<keyword id="KW-0067">ATP-binding</keyword>
<keyword id="KW-0143">Chaperone</keyword>
<keyword id="KW-0547">Nucleotide-binding</keyword>
<keyword id="KW-0597">Phosphoprotein</keyword>
<keyword id="KW-1185">Reference proteome</keyword>
<keyword id="KW-0346">Stress response</keyword>
<comment type="function">
    <text evidence="1">Acts as a chaperone.</text>
</comment>
<comment type="induction">
    <text evidence="1">By stress conditions e.g. heat shock.</text>
</comment>
<comment type="similarity">
    <text evidence="1">Belongs to the heat shock protein 70 family.</text>
</comment>
<name>DNAK_RENSM</name>
<organism>
    <name type="scientific">Renibacterium salmoninarum (strain ATCC 33209 / DSM 20767 / JCM 11484 / NBRC 15589 / NCIMB 2235)</name>
    <dbReference type="NCBI Taxonomy" id="288705"/>
    <lineage>
        <taxon>Bacteria</taxon>
        <taxon>Bacillati</taxon>
        <taxon>Actinomycetota</taxon>
        <taxon>Actinomycetes</taxon>
        <taxon>Micrococcales</taxon>
        <taxon>Micrococcaceae</taxon>
        <taxon>Renibacterium</taxon>
    </lineage>
</organism>